<sequence>MRSKYIVIEGLEGAGKTTARNVVVETLEQLGIRDMVFTREPGGTQLAEKLRSLVLDIKSVGDEVITDKAEVLMFYAARVQLVETVIKPALANGTWVIGDRHDLSTQAYQGGGRGIDQHMLATLRDAVLGGFRPDLTLYLDVTPEVGLKRARARGELDRIEQESFDFFNRTRARYLELAAQDKSIHTIDATQPLEAVMDAIRTTVTNWVKELDA</sequence>
<proteinExistence type="inferred from homology"/>
<evidence type="ECO:0000255" key="1">
    <source>
        <dbReference type="HAMAP-Rule" id="MF_00165"/>
    </source>
</evidence>
<protein>
    <recommendedName>
        <fullName evidence="1">Thymidylate kinase</fullName>
        <ecNumber evidence="1">2.7.4.9</ecNumber>
    </recommendedName>
    <alternativeName>
        <fullName evidence="1">dTMP kinase</fullName>
    </alternativeName>
</protein>
<reference key="1">
    <citation type="journal article" date="2006" name="Proc. Natl. Acad. Sci. U.S.A.">
        <title>Identification of genes subject to positive selection in uropathogenic strains of Escherichia coli: a comparative genomics approach.</title>
        <authorList>
            <person name="Chen S.L."/>
            <person name="Hung C.-S."/>
            <person name="Xu J."/>
            <person name="Reigstad C.S."/>
            <person name="Magrini V."/>
            <person name="Sabo A."/>
            <person name="Blasiar D."/>
            <person name="Bieri T."/>
            <person name="Meyer R.R."/>
            <person name="Ozersky P."/>
            <person name="Armstrong J.R."/>
            <person name="Fulton R.S."/>
            <person name="Latreille J.P."/>
            <person name="Spieth J."/>
            <person name="Hooton T.M."/>
            <person name="Mardis E.R."/>
            <person name="Hultgren S.J."/>
            <person name="Gordon J.I."/>
        </authorList>
    </citation>
    <scope>NUCLEOTIDE SEQUENCE [LARGE SCALE GENOMIC DNA]</scope>
    <source>
        <strain>UTI89 / UPEC</strain>
    </source>
</reference>
<accession>Q1RD57</accession>
<feature type="chain" id="PRO_1000023188" description="Thymidylate kinase">
    <location>
        <begin position="1"/>
        <end position="213"/>
    </location>
</feature>
<feature type="binding site" evidence="1">
    <location>
        <begin position="10"/>
        <end position="17"/>
    </location>
    <ligand>
        <name>ATP</name>
        <dbReference type="ChEBI" id="CHEBI:30616"/>
    </ligand>
</feature>
<keyword id="KW-0067">ATP-binding</keyword>
<keyword id="KW-0418">Kinase</keyword>
<keyword id="KW-0545">Nucleotide biosynthesis</keyword>
<keyword id="KW-0547">Nucleotide-binding</keyword>
<keyword id="KW-0808">Transferase</keyword>
<gene>
    <name evidence="1" type="primary">tmk</name>
    <name type="ordered locus">UTI89_C1225</name>
</gene>
<organism>
    <name type="scientific">Escherichia coli (strain UTI89 / UPEC)</name>
    <dbReference type="NCBI Taxonomy" id="364106"/>
    <lineage>
        <taxon>Bacteria</taxon>
        <taxon>Pseudomonadati</taxon>
        <taxon>Pseudomonadota</taxon>
        <taxon>Gammaproteobacteria</taxon>
        <taxon>Enterobacterales</taxon>
        <taxon>Enterobacteriaceae</taxon>
        <taxon>Escherichia</taxon>
    </lineage>
</organism>
<comment type="function">
    <text evidence="1">Phosphorylation of dTMP to form dTDP in both de novo and salvage pathways of dTTP synthesis.</text>
</comment>
<comment type="catalytic activity">
    <reaction evidence="1">
        <text>dTMP + ATP = dTDP + ADP</text>
        <dbReference type="Rhea" id="RHEA:13517"/>
        <dbReference type="ChEBI" id="CHEBI:30616"/>
        <dbReference type="ChEBI" id="CHEBI:58369"/>
        <dbReference type="ChEBI" id="CHEBI:63528"/>
        <dbReference type="ChEBI" id="CHEBI:456216"/>
        <dbReference type="EC" id="2.7.4.9"/>
    </reaction>
</comment>
<comment type="similarity">
    <text evidence="1">Belongs to the thymidylate kinase family.</text>
</comment>
<dbReference type="EC" id="2.7.4.9" evidence="1"/>
<dbReference type="EMBL" id="CP000243">
    <property type="protein sequence ID" value="ABE06707.1"/>
    <property type="molecule type" value="Genomic_DNA"/>
</dbReference>
<dbReference type="RefSeq" id="WP_001257012.1">
    <property type="nucleotide sequence ID" value="NZ_CP064825.1"/>
</dbReference>
<dbReference type="SMR" id="Q1RD57"/>
<dbReference type="KEGG" id="eci:UTI89_C1225"/>
<dbReference type="HOGENOM" id="CLU_049131_0_1_6"/>
<dbReference type="Proteomes" id="UP000001952">
    <property type="component" value="Chromosome"/>
</dbReference>
<dbReference type="GO" id="GO:0005829">
    <property type="term" value="C:cytosol"/>
    <property type="evidence" value="ECO:0007669"/>
    <property type="project" value="TreeGrafter"/>
</dbReference>
<dbReference type="GO" id="GO:0005524">
    <property type="term" value="F:ATP binding"/>
    <property type="evidence" value="ECO:0007669"/>
    <property type="project" value="UniProtKB-UniRule"/>
</dbReference>
<dbReference type="GO" id="GO:0004798">
    <property type="term" value="F:dTMP kinase activity"/>
    <property type="evidence" value="ECO:0007669"/>
    <property type="project" value="UniProtKB-UniRule"/>
</dbReference>
<dbReference type="GO" id="GO:0006233">
    <property type="term" value="P:dTDP biosynthetic process"/>
    <property type="evidence" value="ECO:0007669"/>
    <property type="project" value="InterPro"/>
</dbReference>
<dbReference type="GO" id="GO:0006235">
    <property type="term" value="P:dTTP biosynthetic process"/>
    <property type="evidence" value="ECO:0007669"/>
    <property type="project" value="UniProtKB-UniRule"/>
</dbReference>
<dbReference type="GO" id="GO:0006227">
    <property type="term" value="P:dUDP biosynthetic process"/>
    <property type="evidence" value="ECO:0007669"/>
    <property type="project" value="TreeGrafter"/>
</dbReference>
<dbReference type="CDD" id="cd01672">
    <property type="entry name" value="TMPK"/>
    <property type="match status" value="1"/>
</dbReference>
<dbReference type="FunFam" id="3.40.50.300:FF:000321">
    <property type="entry name" value="Thymidylate kinase"/>
    <property type="match status" value="1"/>
</dbReference>
<dbReference type="Gene3D" id="3.40.50.300">
    <property type="entry name" value="P-loop containing nucleotide triphosphate hydrolases"/>
    <property type="match status" value="1"/>
</dbReference>
<dbReference type="HAMAP" id="MF_00165">
    <property type="entry name" value="Thymidylate_kinase"/>
    <property type="match status" value="1"/>
</dbReference>
<dbReference type="InterPro" id="IPR027417">
    <property type="entry name" value="P-loop_NTPase"/>
</dbReference>
<dbReference type="InterPro" id="IPR039430">
    <property type="entry name" value="Thymidylate_kin-like_dom"/>
</dbReference>
<dbReference type="InterPro" id="IPR018095">
    <property type="entry name" value="Thymidylate_kin_CS"/>
</dbReference>
<dbReference type="InterPro" id="IPR018094">
    <property type="entry name" value="Thymidylate_kinase"/>
</dbReference>
<dbReference type="NCBIfam" id="TIGR00041">
    <property type="entry name" value="DTMP_kinase"/>
    <property type="match status" value="1"/>
</dbReference>
<dbReference type="PANTHER" id="PTHR10344">
    <property type="entry name" value="THYMIDYLATE KINASE"/>
    <property type="match status" value="1"/>
</dbReference>
<dbReference type="PANTHER" id="PTHR10344:SF4">
    <property type="entry name" value="UMP-CMP KINASE 2, MITOCHONDRIAL"/>
    <property type="match status" value="1"/>
</dbReference>
<dbReference type="Pfam" id="PF02223">
    <property type="entry name" value="Thymidylate_kin"/>
    <property type="match status" value="1"/>
</dbReference>
<dbReference type="SUPFAM" id="SSF52540">
    <property type="entry name" value="P-loop containing nucleoside triphosphate hydrolases"/>
    <property type="match status" value="1"/>
</dbReference>
<dbReference type="PROSITE" id="PS01331">
    <property type="entry name" value="THYMIDYLATE_KINASE"/>
    <property type="match status" value="1"/>
</dbReference>
<name>KTHY_ECOUT</name>